<sequence length="448" mass="51694">MTTHKHRRTEKNLCFKQYYKWILCFILTLYFFASFFVDHDQDHRSSTSISKHLLTNHKPKLFASRAMFESKIHDHKLGFTSQQPNIKTDVFNNLKIYVYDLPSKFNKDWLANDRCTNHLFAAEVALHKAFLSLEGDVRTEDPYEADFFFVPVYVSCNFSTINGFPAIGHARSLINDAIKLVSTQYPFWNRTSGSDHVFTATHDFGSCFHTMEDRAIADGVPIFLRNSIILQTFGVTFNHPCQEVENVVIPPYISPESLHKTQKNIPVTKERDIWVFFRGKMELHPKNISGRFYSKRVRTNIWRSYGGDRRFYLQRQRFAGYQSEIARSVFCLCPLGWAPWSPRLVESVALGCVPVIIADGIRLPFPSTVRWPDISLTVAERDVGKLGDILEHVAATNLSVIQRNLEDPSVRRALMFNVPSREGDATWQVLEALSKKLNRSVRRSNSFL</sequence>
<gene>
    <name type="primary">IRX7</name>
    <name type="synonym">FRA8</name>
    <name type="ordered locus">At2g28110</name>
    <name type="ORF">F24D13.10</name>
</gene>
<protein>
    <recommendedName>
        <fullName>Probable glucuronoxylan glucuronosyltransferase IRX7</fullName>
        <ecNumber>2.4.1.-</ecNumber>
    </recommendedName>
    <alternativeName>
        <fullName>Protein FRAGILE FIBER 8</fullName>
    </alternativeName>
    <alternativeName>
        <fullName>Protein IRREGULAR XYLEM 7</fullName>
    </alternativeName>
</protein>
<reference key="1">
    <citation type="journal article" date="2005" name="Plant Cell">
        <title>Arabidopsis fragile fiber8, which encodes a putative glucuronyltransferase, is essential for normal secondary wall synthesis.</title>
        <authorList>
            <person name="Zhong R."/>
            <person name="Pena M.J."/>
            <person name="Zhou G.K."/>
            <person name="Nairn C.J."/>
            <person name="Wood-Jones A."/>
            <person name="Richardson E.A."/>
            <person name="Morrison W.H. III"/>
            <person name="Darvill A.G."/>
            <person name="York W.S."/>
            <person name="Ye Z.H."/>
        </authorList>
    </citation>
    <scope>NUCLEOTIDE SEQUENCE [GENOMIC DNA / MRNA]</scope>
    <scope>FUNCTION</scope>
    <scope>SUBCELLULAR LOCATION</scope>
    <scope>TISSUE SPECIFICITY</scope>
    <scope>DISRUPTION PHENOTYPE</scope>
</reference>
<reference key="2">
    <citation type="journal article" date="1999" name="Nature">
        <title>Sequence and analysis of chromosome 2 of the plant Arabidopsis thaliana.</title>
        <authorList>
            <person name="Lin X."/>
            <person name="Kaul S."/>
            <person name="Rounsley S.D."/>
            <person name="Shea T.P."/>
            <person name="Benito M.-I."/>
            <person name="Town C.D."/>
            <person name="Fujii C.Y."/>
            <person name="Mason T.M."/>
            <person name="Bowman C.L."/>
            <person name="Barnstead M.E."/>
            <person name="Feldblyum T.V."/>
            <person name="Buell C.R."/>
            <person name="Ketchum K.A."/>
            <person name="Lee J.J."/>
            <person name="Ronning C.M."/>
            <person name="Koo H.L."/>
            <person name="Moffat K.S."/>
            <person name="Cronin L.A."/>
            <person name="Shen M."/>
            <person name="Pai G."/>
            <person name="Van Aken S."/>
            <person name="Umayam L."/>
            <person name="Tallon L.J."/>
            <person name="Gill J.E."/>
            <person name="Adams M.D."/>
            <person name="Carrera A.J."/>
            <person name="Creasy T.H."/>
            <person name="Goodman H.M."/>
            <person name="Somerville C.R."/>
            <person name="Copenhaver G.P."/>
            <person name="Preuss D."/>
            <person name="Nierman W.C."/>
            <person name="White O."/>
            <person name="Eisen J.A."/>
            <person name="Salzberg S.L."/>
            <person name="Fraser C.M."/>
            <person name="Venter J.C."/>
        </authorList>
    </citation>
    <scope>NUCLEOTIDE SEQUENCE [LARGE SCALE GENOMIC DNA]</scope>
    <source>
        <strain>cv. Columbia</strain>
    </source>
</reference>
<reference key="3">
    <citation type="journal article" date="2017" name="Plant J.">
        <title>Araport11: a complete reannotation of the Arabidopsis thaliana reference genome.</title>
        <authorList>
            <person name="Cheng C.Y."/>
            <person name="Krishnakumar V."/>
            <person name="Chan A.P."/>
            <person name="Thibaud-Nissen F."/>
            <person name="Schobel S."/>
            <person name="Town C.D."/>
        </authorList>
    </citation>
    <scope>GENOME REANNOTATION</scope>
    <source>
        <strain>cv. Columbia</strain>
    </source>
</reference>
<reference key="4">
    <citation type="journal article" date="2003" name="Science">
        <title>Empirical analysis of transcriptional activity in the Arabidopsis genome.</title>
        <authorList>
            <person name="Yamada K."/>
            <person name="Lim J."/>
            <person name="Dale J.M."/>
            <person name="Chen H."/>
            <person name="Shinn P."/>
            <person name="Palm C.J."/>
            <person name="Southwick A.M."/>
            <person name="Wu H.C."/>
            <person name="Kim C.J."/>
            <person name="Nguyen M."/>
            <person name="Pham P.K."/>
            <person name="Cheuk R.F."/>
            <person name="Karlin-Newmann G."/>
            <person name="Liu S.X."/>
            <person name="Lam B."/>
            <person name="Sakano H."/>
            <person name="Wu T."/>
            <person name="Yu G."/>
            <person name="Miranda M."/>
            <person name="Quach H.L."/>
            <person name="Tripp M."/>
            <person name="Chang C.H."/>
            <person name="Lee J.M."/>
            <person name="Toriumi M.J."/>
            <person name="Chan M.M."/>
            <person name="Tang C.C."/>
            <person name="Onodera C.S."/>
            <person name="Deng J.M."/>
            <person name="Akiyama K."/>
            <person name="Ansari Y."/>
            <person name="Arakawa T."/>
            <person name="Banh J."/>
            <person name="Banno F."/>
            <person name="Bowser L."/>
            <person name="Brooks S.Y."/>
            <person name="Carninci P."/>
            <person name="Chao Q."/>
            <person name="Choy N."/>
            <person name="Enju A."/>
            <person name="Goldsmith A.D."/>
            <person name="Gurjal M."/>
            <person name="Hansen N.F."/>
            <person name="Hayashizaki Y."/>
            <person name="Johnson-Hopson C."/>
            <person name="Hsuan V.W."/>
            <person name="Iida K."/>
            <person name="Karnes M."/>
            <person name="Khan S."/>
            <person name="Koesema E."/>
            <person name="Ishida J."/>
            <person name="Jiang P.X."/>
            <person name="Jones T."/>
            <person name="Kawai J."/>
            <person name="Kamiya A."/>
            <person name="Meyers C."/>
            <person name="Nakajima M."/>
            <person name="Narusaka M."/>
            <person name="Seki M."/>
            <person name="Sakurai T."/>
            <person name="Satou M."/>
            <person name="Tamse R."/>
            <person name="Vaysberg M."/>
            <person name="Wallender E.K."/>
            <person name="Wong C."/>
            <person name="Yamamura Y."/>
            <person name="Yuan S."/>
            <person name="Shinozaki K."/>
            <person name="Davis R.W."/>
            <person name="Theologis A."/>
            <person name="Ecker J.R."/>
        </authorList>
    </citation>
    <scope>NUCLEOTIDE SEQUENCE [LARGE SCALE MRNA]</scope>
    <source>
        <strain>cv. Columbia</strain>
    </source>
</reference>
<reference key="5">
    <citation type="journal article" date="2005" name="Plant Cell">
        <title>Identification of novel genes in Arabidopsis involved in secondary cell wall formation using expression profiling and reverse genetics.</title>
        <authorList>
            <person name="Brown D.M."/>
            <person name="Zeef L.A.H."/>
            <person name="Ellis J."/>
            <person name="Goodacre R."/>
            <person name="Turner S.R."/>
        </authorList>
    </citation>
    <scope>FUNCTION</scope>
    <scope>DISRUPTION PHENOTYPE</scope>
</reference>
<reference key="6">
    <citation type="journal article" date="2007" name="Plant Cell Physiol.">
        <title>The irregular xylem9 mutant is deficient in xylan xylosyltransferase activity.</title>
        <authorList>
            <person name="Lee C."/>
            <person name="O'Neill M.A."/>
            <person name="Tsumuraya Y."/>
            <person name="Darvill A.G."/>
            <person name="Ye Z.H."/>
        </authorList>
    </citation>
    <scope>FUNCTION</scope>
</reference>
<reference key="7">
    <citation type="journal article" date="2007" name="Plant Cell Physiol.">
        <title>The PARVUS gene is expressed in cells undergoing secondary wall thickening and is essential for glucuronoxylan biosynthesis.</title>
        <authorList>
            <person name="Lee C."/>
            <person name="Zhong R."/>
            <person name="Richardson E.A."/>
            <person name="Himmelsbach D.S."/>
            <person name="McPhail B.T."/>
            <person name="Ye Z.H."/>
        </authorList>
    </citation>
    <scope>FUNCTION</scope>
</reference>
<reference key="8">
    <citation type="journal article" date="2007" name="Plant J.">
        <title>Comparison of five xylan synthesis mutants reveals new insight into the mechanisms of xylan synthesis.</title>
        <authorList>
            <person name="Brown D.M."/>
            <person name="Goubet F."/>
            <person name="Wong V.W."/>
            <person name="Goodacre R."/>
            <person name="Stephens E."/>
            <person name="Dupree P."/>
            <person name="Turner S.R."/>
        </authorList>
    </citation>
    <scope>FUNCTION</scope>
    <scope>DISRUPTION PHENOTYPE</scope>
</reference>
<keyword id="KW-0961">Cell wall biogenesis/degradation</keyword>
<keyword id="KW-0325">Glycoprotein</keyword>
<keyword id="KW-0328">Glycosyltransferase</keyword>
<keyword id="KW-0333">Golgi apparatus</keyword>
<keyword id="KW-0472">Membrane</keyword>
<keyword id="KW-1185">Reference proteome</keyword>
<keyword id="KW-0735">Signal-anchor</keyword>
<keyword id="KW-0808">Transferase</keyword>
<keyword id="KW-0812">Transmembrane</keyword>
<keyword id="KW-1133">Transmembrane helix</keyword>
<proteinExistence type="evidence at transcript level"/>
<name>IRX7_ARATH</name>
<accession>Q9ZUV3</accession>
<accession>Q8RXC5</accession>
<organism>
    <name type="scientific">Arabidopsis thaliana</name>
    <name type="common">Mouse-ear cress</name>
    <dbReference type="NCBI Taxonomy" id="3702"/>
    <lineage>
        <taxon>Eukaryota</taxon>
        <taxon>Viridiplantae</taxon>
        <taxon>Streptophyta</taxon>
        <taxon>Embryophyta</taxon>
        <taxon>Tracheophyta</taxon>
        <taxon>Spermatophyta</taxon>
        <taxon>Magnoliopsida</taxon>
        <taxon>eudicotyledons</taxon>
        <taxon>Gunneridae</taxon>
        <taxon>Pentapetalae</taxon>
        <taxon>rosids</taxon>
        <taxon>malvids</taxon>
        <taxon>Brassicales</taxon>
        <taxon>Brassicaceae</taxon>
        <taxon>Camelineae</taxon>
        <taxon>Arabidopsis</taxon>
    </lineage>
</organism>
<feature type="chain" id="PRO_0000407574" description="Probable glucuronoxylan glucuronosyltransferase IRX7">
    <location>
        <begin position="1"/>
        <end position="448"/>
    </location>
</feature>
<feature type="topological domain" description="Cytoplasmic" evidence="1">
    <location>
        <begin position="1"/>
        <end position="16"/>
    </location>
</feature>
<feature type="transmembrane region" description="Helical; Signal-anchor for type II membrane protein" evidence="1">
    <location>
        <begin position="17"/>
        <end position="37"/>
    </location>
</feature>
<feature type="topological domain" description="Lumenal" evidence="1">
    <location>
        <begin position="38"/>
        <end position="448"/>
    </location>
</feature>
<feature type="glycosylation site" description="N-linked (GlcNAc...) asparagine" evidence="1">
    <location>
        <position position="157"/>
    </location>
</feature>
<feature type="glycosylation site" description="N-linked (GlcNAc...) asparagine" evidence="1">
    <location>
        <position position="189"/>
    </location>
</feature>
<feature type="glycosylation site" description="N-linked (GlcNAc...) asparagine" evidence="1">
    <location>
        <position position="287"/>
    </location>
</feature>
<feature type="glycosylation site" description="N-linked (GlcNAc...) asparagine" evidence="1">
    <location>
        <position position="397"/>
    </location>
</feature>
<feature type="glycosylation site" description="N-linked (GlcNAc...) asparagine" evidence="1">
    <location>
        <position position="438"/>
    </location>
</feature>
<dbReference type="EC" id="2.4.1.-"/>
<dbReference type="EMBL" id="DQ182567">
    <property type="protein sequence ID" value="ABA60868.1"/>
    <property type="molecule type" value="mRNA"/>
</dbReference>
<dbReference type="EMBL" id="DQ182568">
    <property type="protein sequence ID" value="ABA60869.1"/>
    <property type="molecule type" value="Genomic_DNA"/>
</dbReference>
<dbReference type="EMBL" id="AC005851">
    <property type="protein sequence ID" value="AAC98455.1"/>
    <property type="molecule type" value="Genomic_DNA"/>
</dbReference>
<dbReference type="EMBL" id="CP002685">
    <property type="protein sequence ID" value="AEC08081.1"/>
    <property type="molecule type" value="Genomic_DNA"/>
</dbReference>
<dbReference type="EMBL" id="AY081347">
    <property type="protein sequence ID" value="AAL91236.1"/>
    <property type="status" value="ALT_FRAME"/>
    <property type="molecule type" value="mRNA"/>
</dbReference>
<dbReference type="EMBL" id="BT006256">
    <property type="protein sequence ID" value="AAP13364.1"/>
    <property type="molecule type" value="mRNA"/>
</dbReference>
<dbReference type="PIR" id="H84680">
    <property type="entry name" value="H84680"/>
</dbReference>
<dbReference type="RefSeq" id="NP_850113.2">
    <property type="nucleotide sequence ID" value="NM_179782.4"/>
</dbReference>
<dbReference type="BioGRID" id="2707">
    <property type="interactions" value="1"/>
</dbReference>
<dbReference type="FunCoup" id="Q9ZUV3">
    <property type="interactions" value="8"/>
</dbReference>
<dbReference type="STRING" id="3702.Q9ZUV3"/>
<dbReference type="CAZy" id="GT47">
    <property type="family name" value="Glycosyltransferase Family 47"/>
</dbReference>
<dbReference type="GlyCosmos" id="Q9ZUV3">
    <property type="glycosylation" value="5 sites, No reported glycans"/>
</dbReference>
<dbReference type="GlyGen" id="Q9ZUV3">
    <property type="glycosylation" value="5 sites"/>
</dbReference>
<dbReference type="iPTMnet" id="Q9ZUV3"/>
<dbReference type="PaxDb" id="3702-AT2G28110.1"/>
<dbReference type="ProteomicsDB" id="247053"/>
<dbReference type="EnsemblPlants" id="AT2G28110.1">
    <property type="protein sequence ID" value="AT2G28110.1"/>
    <property type="gene ID" value="AT2G28110"/>
</dbReference>
<dbReference type="GeneID" id="817357"/>
<dbReference type="Gramene" id="AT2G28110.1">
    <property type="protein sequence ID" value="AT2G28110.1"/>
    <property type="gene ID" value="AT2G28110"/>
</dbReference>
<dbReference type="KEGG" id="ath:AT2G28110"/>
<dbReference type="Araport" id="AT2G28110"/>
<dbReference type="TAIR" id="AT2G28110">
    <property type="gene designation" value="FRA8"/>
</dbReference>
<dbReference type="eggNOG" id="KOG1021">
    <property type="taxonomic scope" value="Eukaryota"/>
</dbReference>
<dbReference type="HOGENOM" id="CLU_039682_1_0_1"/>
<dbReference type="InParanoid" id="Q9ZUV3"/>
<dbReference type="OMA" id="WISNERC"/>
<dbReference type="PhylomeDB" id="Q9ZUV3"/>
<dbReference type="BioCyc" id="ARA:AT2G28110-MONOMER"/>
<dbReference type="PRO" id="PR:Q9ZUV3"/>
<dbReference type="Proteomes" id="UP000006548">
    <property type="component" value="Chromosome 2"/>
</dbReference>
<dbReference type="ExpressionAtlas" id="Q9ZUV3">
    <property type="expression patterns" value="baseline and differential"/>
</dbReference>
<dbReference type="GO" id="GO:0005794">
    <property type="term" value="C:Golgi apparatus"/>
    <property type="evidence" value="ECO:0000314"/>
    <property type="project" value="TAIR"/>
</dbReference>
<dbReference type="GO" id="GO:0000139">
    <property type="term" value="C:Golgi membrane"/>
    <property type="evidence" value="ECO:0007669"/>
    <property type="project" value="UniProtKB-SubCell"/>
</dbReference>
<dbReference type="GO" id="GO:0015020">
    <property type="term" value="F:glucuronosyltransferase activity"/>
    <property type="evidence" value="ECO:0000250"/>
    <property type="project" value="TAIR"/>
</dbReference>
<dbReference type="GO" id="GO:0071555">
    <property type="term" value="P:cell wall organization"/>
    <property type="evidence" value="ECO:0007669"/>
    <property type="project" value="UniProtKB-KW"/>
</dbReference>
<dbReference type="GO" id="GO:0010417">
    <property type="term" value="P:glucuronoxylan biosynthetic process"/>
    <property type="evidence" value="ECO:0000315"/>
    <property type="project" value="TAIR"/>
</dbReference>
<dbReference type="GO" id="GO:0009834">
    <property type="term" value="P:plant-type secondary cell wall biogenesis"/>
    <property type="evidence" value="ECO:0000315"/>
    <property type="project" value="TAIR"/>
</dbReference>
<dbReference type="GO" id="GO:0006486">
    <property type="term" value="P:protein glycosylation"/>
    <property type="evidence" value="ECO:0007669"/>
    <property type="project" value="InterPro"/>
</dbReference>
<dbReference type="InterPro" id="IPR004263">
    <property type="entry name" value="Exostosin"/>
</dbReference>
<dbReference type="InterPro" id="IPR040911">
    <property type="entry name" value="Exostosin_GT47"/>
</dbReference>
<dbReference type="PANTHER" id="PTHR11062">
    <property type="entry name" value="EXOSTOSIN HEPARAN SULFATE GLYCOSYLTRANSFERASE -RELATED"/>
    <property type="match status" value="1"/>
</dbReference>
<dbReference type="PANTHER" id="PTHR11062:SF229">
    <property type="entry name" value="GLUCURONOXYLAN GLUCURONOSYLTRANSFERASE IRX7-RELATED"/>
    <property type="match status" value="1"/>
</dbReference>
<dbReference type="Pfam" id="PF03016">
    <property type="entry name" value="Exostosin_GT47"/>
    <property type="match status" value="1"/>
</dbReference>
<evidence type="ECO:0000255" key="1"/>
<evidence type="ECO:0000269" key="2">
    <source>
    </source>
</evidence>
<evidence type="ECO:0000269" key="3">
    <source>
    </source>
</evidence>
<evidence type="ECO:0000269" key="4">
    <source>
    </source>
</evidence>
<evidence type="ECO:0000269" key="5">
    <source>
    </source>
</evidence>
<evidence type="ECO:0000269" key="6">
    <source>
    </source>
</evidence>
<evidence type="ECO:0000305" key="7"/>
<evidence type="ECO:0000305" key="8">
    <source>
    </source>
</evidence>
<comment type="function">
    <text evidence="2 3 4 5 6">Involved in the synthesis of the hemicellulose glucuronoxylan, a major component of secondary cell walls. Probably involved in the synthesis of the glycosyl sequence at the glucuronoxylan reducing end.</text>
</comment>
<comment type="subcellular location">
    <subcellularLocation>
        <location evidence="8">Golgi apparatus membrane</location>
        <topology evidence="8">Single-pass type II membrane protein</topology>
    </subcellularLocation>
</comment>
<comment type="tissue specificity">
    <text evidence="3">Expressed in developing interfascicular fibers and xylem cells in stems and developing secondary xylem in roots.</text>
</comment>
<comment type="disruption phenotype">
    <text evidence="2 3 5">Dwarf phenotype. Strong reduction of secondary wall thickness, collapsed xylem vessels and reduced xylan content in cell wall.</text>
</comment>
<comment type="similarity">
    <text evidence="7">Belongs to the glycosyltransferase 47 family.</text>
</comment>
<comment type="sequence caution" evidence="7">
    <conflict type="frameshift">
        <sequence resource="EMBL-CDS" id="AAL91236"/>
    </conflict>
</comment>